<dbReference type="EMBL" id="AF304068">
    <property type="protein sequence ID" value="AAG30911.1"/>
    <property type="molecule type" value="Genomic_DNA"/>
</dbReference>
<dbReference type="RefSeq" id="NP_944723.1">
    <property type="nucleotide sequence ID" value="NC_005276.1"/>
</dbReference>
<dbReference type="SMR" id="Q9G7U1"/>
<dbReference type="GeneID" id="2658401"/>
<dbReference type="CTD" id="4519"/>
<dbReference type="GO" id="GO:0005743">
    <property type="term" value="C:mitochondrial inner membrane"/>
    <property type="evidence" value="ECO:0007669"/>
    <property type="project" value="UniProtKB-SubCell"/>
</dbReference>
<dbReference type="GO" id="GO:0045275">
    <property type="term" value="C:respiratory chain complex III"/>
    <property type="evidence" value="ECO:0007669"/>
    <property type="project" value="InterPro"/>
</dbReference>
<dbReference type="GO" id="GO:0046872">
    <property type="term" value="F:metal ion binding"/>
    <property type="evidence" value="ECO:0007669"/>
    <property type="project" value="UniProtKB-KW"/>
</dbReference>
<dbReference type="GO" id="GO:0008121">
    <property type="term" value="F:ubiquinol-cytochrome-c reductase activity"/>
    <property type="evidence" value="ECO:0007669"/>
    <property type="project" value="InterPro"/>
</dbReference>
<dbReference type="GO" id="GO:0006122">
    <property type="term" value="P:mitochondrial electron transport, ubiquinol to cytochrome c"/>
    <property type="evidence" value="ECO:0007669"/>
    <property type="project" value="TreeGrafter"/>
</dbReference>
<dbReference type="CDD" id="cd00290">
    <property type="entry name" value="cytochrome_b_C"/>
    <property type="match status" value="1"/>
</dbReference>
<dbReference type="CDD" id="cd00284">
    <property type="entry name" value="Cytochrome_b_N"/>
    <property type="match status" value="1"/>
</dbReference>
<dbReference type="FunFam" id="1.20.810.10:FF:000002">
    <property type="entry name" value="Cytochrome b"/>
    <property type="match status" value="1"/>
</dbReference>
<dbReference type="Gene3D" id="1.20.810.10">
    <property type="entry name" value="Cytochrome Bc1 Complex, Chain C"/>
    <property type="match status" value="1"/>
</dbReference>
<dbReference type="InterPro" id="IPR005798">
    <property type="entry name" value="Cyt_b/b6_C"/>
</dbReference>
<dbReference type="InterPro" id="IPR036150">
    <property type="entry name" value="Cyt_b/b6_C_sf"/>
</dbReference>
<dbReference type="InterPro" id="IPR005797">
    <property type="entry name" value="Cyt_b/b6_N"/>
</dbReference>
<dbReference type="InterPro" id="IPR027387">
    <property type="entry name" value="Cytb/b6-like_sf"/>
</dbReference>
<dbReference type="InterPro" id="IPR030689">
    <property type="entry name" value="Cytochrome_b"/>
</dbReference>
<dbReference type="InterPro" id="IPR048260">
    <property type="entry name" value="Cytochrome_b_C_euk/bac"/>
</dbReference>
<dbReference type="InterPro" id="IPR048259">
    <property type="entry name" value="Cytochrome_b_N_euk/bac"/>
</dbReference>
<dbReference type="InterPro" id="IPR016174">
    <property type="entry name" value="Di-haem_cyt_TM"/>
</dbReference>
<dbReference type="PANTHER" id="PTHR19271">
    <property type="entry name" value="CYTOCHROME B"/>
    <property type="match status" value="1"/>
</dbReference>
<dbReference type="PANTHER" id="PTHR19271:SF16">
    <property type="entry name" value="CYTOCHROME B"/>
    <property type="match status" value="1"/>
</dbReference>
<dbReference type="Pfam" id="PF00032">
    <property type="entry name" value="Cytochrom_B_C"/>
    <property type="match status" value="1"/>
</dbReference>
<dbReference type="Pfam" id="PF00033">
    <property type="entry name" value="Cytochrome_B"/>
    <property type="match status" value="1"/>
</dbReference>
<dbReference type="PIRSF" id="PIRSF038885">
    <property type="entry name" value="COB"/>
    <property type="match status" value="1"/>
</dbReference>
<dbReference type="SUPFAM" id="SSF81648">
    <property type="entry name" value="a domain/subunit of cytochrome bc1 complex (Ubiquinol-cytochrome c reductase)"/>
    <property type="match status" value="1"/>
</dbReference>
<dbReference type="SUPFAM" id="SSF81342">
    <property type="entry name" value="Transmembrane di-heme cytochromes"/>
    <property type="match status" value="1"/>
</dbReference>
<dbReference type="PROSITE" id="PS51003">
    <property type="entry name" value="CYTB_CTER"/>
    <property type="match status" value="1"/>
</dbReference>
<dbReference type="PROSITE" id="PS51002">
    <property type="entry name" value="CYTB_NTER"/>
    <property type="match status" value="1"/>
</dbReference>
<sequence length="379" mass="42755">MTNIRKTHPLMKILNNALIDLPTPSNISSWWNFGSLLGLCLIIQILTGLFLAMHYTPDTLTAFSSVAHICRDVNYGWLIRYLHANGASMFFICLYIHIGRGLYYGSHTSQETWNIGVLLLLMVMATAFMGYVLPWGQMSFWGATVITNLLSAIPYIGTTLVEWVWGGFSIDKATLTRFFALHFILPFIITALVTVHLLFLHETGSNNPTGIPSNMEKIPFHPYYTIKDILGALLLVSVLLTLTLFAPDLLGDPDNYTPANPLNTPTHIKPEWYFLFAYAILRSIPNKLGGVLALLLSILILIFIPMLQTAKQRSMMFRPLSQLLFWILLTDLLTLTWIGGQPVEHPYIIMGQLASILYFLLILVLMPIASLIENKLLKW</sequence>
<keyword id="KW-0249">Electron transport</keyword>
<keyword id="KW-0349">Heme</keyword>
<keyword id="KW-0408">Iron</keyword>
<keyword id="KW-0472">Membrane</keyword>
<keyword id="KW-0479">Metal-binding</keyword>
<keyword id="KW-0496">Mitochondrion</keyword>
<keyword id="KW-0999">Mitochondrion inner membrane</keyword>
<keyword id="KW-0679">Respiratory chain</keyword>
<keyword id="KW-0812">Transmembrane</keyword>
<keyword id="KW-1133">Transmembrane helix</keyword>
<keyword id="KW-0813">Transport</keyword>
<keyword id="KW-0830">Ubiquinone</keyword>
<reference key="1">
    <citation type="journal article" date="2000" name="Proc. Natl. Acad. Sci. U.S.A.">
        <title>Independent adaptation to riverine habitats allowed survival of ancient cetacean lineages.</title>
        <authorList>
            <person name="Cassens I."/>
            <person name="Vicario S."/>
            <person name="Waddell V.G."/>
            <person name="Balchowsky H."/>
            <person name="Van Belle D."/>
            <person name="Ding W."/>
            <person name="Fan C."/>
            <person name="Mohan L."/>
            <person name="Simoes-Lopes P.C."/>
            <person name="Bastida R."/>
            <person name="Meyer A."/>
            <person name="Stanhope M.J."/>
            <person name="Milinkovitch M.C."/>
        </authorList>
    </citation>
    <scope>NUCLEOTIDE SEQUENCE [GENOMIC DNA]</scope>
</reference>
<organism>
    <name type="scientific">Inia geoffrensis</name>
    <name type="common">Amazon river dolphin</name>
    <name type="synonym">Delphinus geoffrensis</name>
    <dbReference type="NCBI Taxonomy" id="9725"/>
    <lineage>
        <taxon>Eukaryota</taxon>
        <taxon>Metazoa</taxon>
        <taxon>Chordata</taxon>
        <taxon>Craniata</taxon>
        <taxon>Vertebrata</taxon>
        <taxon>Euteleostomi</taxon>
        <taxon>Mammalia</taxon>
        <taxon>Eutheria</taxon>
        <taxon>Laurasiatheria</taxon>
        <taxon>Artiodactyla</taxon>
        <taxon>Whippomorpha</taxon>
        <taxon>Cetacea</taxon>
        <taxon>Odontoceti</taxon>
        <taxon>Iniidae</taxon>
        <taxon>Inia</taxon>
    </lineage>
</organism>
<gene>
    <name type="primary">MT-CYB</name>
    <name type="synonym">COB</name>
    <name type="synonym">CYTB</name>
    <name type="synonym">MTCYB</name>
</gene>
<evidence type="ECO:0000250" key="1"/>
<evidence type="ECO:0000250" key="2">
    <source>
        <dbReference type="UniProtKB" id="P00157"/>
    </source>
</evidence>
<evidence type="ECO:0000255" key="3">
    <source>
        <dbReference type="PROSITE-ProRule" id="PRU00967"/>
    </source>
</evidence>
<evidence type="ECO:0000255" key="4">
    <source>
        <dbReference type="PROSITE-ProRule" id="PRU00968"/>
    </source>
</evidence>
<comment type="function">
    <text evidence="2">Component of the ubiquinol-cytochrome c reductase complex (complex III or cytochrome b-c1 complex) that is part of the mitochondrial respiratory chain. The b-c1 complex mediates electron transfer from ubiquinol to cytochrome c. Contributes to the generation of a proton gradient across the mitochondrial membrane that is then used for ATP synthesis.</text>
</comment>
<comment type="cofactor">
    <cofactor evidence="2">
        <name>heme b</name>
        <dbReference type="ChEBI" id="CHEBI:60344"/>
    </cofactor>
    <text evidence="2">Binds 2 heme b groups non-covalently.</text>
</comment>
<comment type="subunit">
    <text evidence="2">The cytochrome bc1 complex contains 11 subunits: 3 respiratory subunits (MT-CYB, CYC1 and UQCRFS1), 2 core proteins (UQCRC1 and UQCRC2) and 6 low-molecular weight proteins (UQCRH/QCR6, UQCRB/QCR7, UQCRQ/QCR8, UQCR10/QCR9, UQCR11/QCR10 and a cleavage product of UQCRFS1). This cytochrome bc1 complex then forms a dimer.</text>
</comment>
<comment type="subcellular location">
    <subcellularLocation>
        <location evidence="2">Mitochondrion inner membrane</location>
        <topology evidence="2">Multi-pass membrane protein</topology>
    </subcellularLocation>
</comment>
<comment type="miscellaneous">
    <text evidence="1">Heme 1 (or BL or b562) is low-potential and absorbs at about 562 nm, and heme 2 (or BH or b566) is high-potential and absorbs at about 566 nm.</text>
</comment>
<comment type="similarity">
    <text evidence="3 4">Belongs to the cytochrome b family.</text>
</comment>
<comment type="caution">
    <text evidence="2">The full-length protein contains only eight transmembrane helices, not nine as predicted by bioinformatics tools.</text>
</comment>
<protein>
    <recommendedName>
        <fullName>Cytochrome b</fullName>
    </recommendedName>
    <alternativeName>
        <fullName>Complex III subunit 3</fullName>
    </alternativeName>
    <alternativeName>
        <fullName>Complex III subunit III</fullName>
    </alternativeName>
    <alternativeName>
        <fullName>Cytochrome b-c1 complex subunit 3</fullName>
    </alternativeName>
    <alternativeName>
        <fullName>Ubiquinol-cytochrome-c reductase complex cytochrome b subunit</fullName>
    </alternativeName>
</protein>
<name>CYB_INIGE</name>
<geneLocation type="mitochondrion"/>
<proteinExistence type="inferred from homology"/>
<feature type="chain" id="PRO_0000061065" description="Cytochrome b">
    <location>
        <begin position="1"/>
        <end position="379"/>
    </location>
</feature>
<feature type="transmembrane region" description="Helical" evidence="2">
    <location>
        <begin position="33"/>
        <end position="53"/>
    </location>
</feature>
<feature type="transmembrane region" description="Helical" evidence="2">
    <location>
        <begin position="77"/>
        <end position="98"/>
    </location>
</feature>
<feature type="transmembrane region" description="Helical" evidence="2">
    <location>
        <begin position="113"/>
        <end position="133"/>
    </location>
</feature>
<feature type="transmembrane region" description="Helical" evidence="2">
    <location>
        <begin position="178"/>
        <end position="198"/>
    </location>
</feature>
<feature type="transmembrane region" description="Helical" evidence="2">
    <location>
        <begin position="226"/>
        <end position="246"/>
    </location>
</feature>
<feature type="transmembrane region" description="Helical" evidence="2">
    <location>
        <begin position="288"/>
        <end position="308"/>
    </location>
</feature>
<feature type="transmembrane region" description="Helical" evidence="2">
    <location>
        <begin position="320"/>
        <end position="340"/>
    </location>
</feature>
<feature type="transmembrane region" description="Helical" evidence="2">
    <location>
        <begin position="347"/>
        <end position="367"/>
    </location>
</feature>
<feature type="binding site" description="axial binding residue" evidence="2">
    <location>
        <position position="83"/>
    </location>
    <ligand>
        <name>heme b</name>
        <dbReference type="ChEBI" id="CHEBI:60344"/>
        <label>b562</label>
    </ligand>
    <ligandPart>
        <name>Fe</name>
        <dbReference type="ChEBI" id="CHEBI:18248"/>
    </ligandPart>
</feature>
<feature type="binding site" description="axial binding residue" evidence="2">
    <location>
        <position position="97"/>
    </location>
    <ligand>
        <name>heme b</name>
        <dbReference type="ChEBI" id="CHEBI:60344"/>
        <label>b566</label>
    </ligand>
    <ligandPart>
        <name>Fe</name>
        <dbReference type="ChEBI" id="CHEBI:18248"/>
    </ligandPart>
</feature>
<feature type="binding site" description="axial binding residue" evidence="2">
    <location>
        <position position="182"/>
    </location>
    <ligand>
        <name>heme b</name>
        <dbReference type="ChEBI" id="CHEBI:60344"/>
        <label>b562</label>
    </ligand>
    <ligandPart>
        <name>Fe</name>
        <dbReference type="ChEBI" id="CHEBI:18248"/>
    </ligandPart>
</feature>
<feature type="binding site" description="axial binding residue" evidence="2">
    <location>
        <position position="196"/>
    </location>
    <ligand>
        <name>heme b</name>
        <dbReference type="ChEBI" id="CHEBI:60344"/>
        <label>b566</label>
    </ligand>
    <ligandPart>
        <name>Fe</name>
        <dbReference type="ChEBI" id="CHEBI:18248"/>
    </ligandPart>
</feature>
<feature type="binding site" evidence="2">
    <location>
        <position position="201"/>
    </location>
    <ligand>
        <name>a ubiquinone</name>
        <dbReference type="ChEBI" id="CHEBI:16389"/>
    </ligand>
</feature>
<accession>Q9G7U1</accession>